<keyword id="KW-1185">Reference proteome</keyword>
<keyword id="KW-0687">Ribonucleoprotein</keyword>
<keyword id="KW-0689">Ribosomal protein</keyword>
<keyword id="KW-0694">RNA-binding</keyword>
<keyword id="KW-0699">rRNA-binding</keyword>
<evidence type="ECO:0000255" key="1">
    <source>
        <dbReference type="HAMAP-Rule" id="MF_00503"/>
    </source>
</evidence>
<evidence type="ECO:0000305" key="2"/>
<gene>
    <name evidence="1" type="primary">rplI</name>
    <name type="ordered locus">OB3461</name>
</gene>
<feature type="chain" id="PRO_0000236556" description="Large ribosomal subunit protein bL9">
    <location>
        <begin position="1"/>
        <end position="148"/>
    </location>
</feature>
<protein>
    <recommendedName>
        <fullName evidence="1">Large ribosomal subunit protein bL9</fullName>
    </recommendedName>
    <alternativeName>
        <fullName evidence="2">50S ribosomal protein L9</fullName>
    </alternativeName>
</protein>
<proteinExistence type="inferred from homology"/>
<comment type="function">
    <text evidence="1">Binds to the 23S rRNA.</text>
</comment>
<comment type="similarity">
    <text evidence="1">Belongs to the bacterial ribosomal protein bL9 family.</text>
</comment>
<sequence length="148" mass="16425">MKVIFLKDVKGKAKKGDVKNVPDGYARNYLLKNNLAEEATSGNMKALEAKKQKADQLEQKEKEDAINLKDKLAEIAVELEAKSGDNGRLFGSITSKQISEALQKQFGHKIDKRKIELDEPIRALGYTTVPVKLHPEVSGSIKVHVAEK</sequence>
<name>RL9_OCEIH</name>
<reference key="1">
    <citation type="journal article" date="2002" name="Nucleic Acids Res.">
        <title>Genome sequence of Oceanobacillus iheyensis isolated from the Iheya Ridge and its unexpected adaptive capabilities to extreme environments.</title>
        <authorList>
            <person name="Takami H."/>
            <person name="Takaki Y."/>
            <person name="Uchiyama I."/>
        </authorList>
    </citation>
    <scope>NUCLEOTIDE SEQUENCE [LARGE SCALE GENOMIC DNA]</scope>
    <source>
        <strain>DSM 14371 / CIP 107618 / JCM 11309 / KCTC 3954 / HTE831</strain>
    </source>
</reference>
<organism>
    <name type="scientific">Oceanobacillus iheyensis (strain DSM 14371 / CIP 107618 / JCM 11309 / KCTC 3954 / HTE831)</name>
    <dbReference type="NCBI Taxonomy" id="221109"/>
    <lineage>
        <taxon>Bacteria</taxon>
        <taxon>Bacillati</taxon>
        <taxon>Bacillota</taxon>
        <taxon>Bacilli</taxon>
        <taxon>Bacillales</taxon>
        <taxon>Bacillaceae</taxon>
        <taxon>Oceanobacillus</taxon>
    </lineage>
</organism>
<dbReference type="EMBL" id="BA000028">
    <property type="protein sequence ID" value="BAC15417.1"/>
    <property type="molecule type" value="Genomic_DNA"/>
</dbReference>
<dbReference type="RefSeq" id="WP_011067859.1">
    <property type="nucleotide sequence ID" value="NC_004193.1"/>
</dbReference>
<dbReference type="SMR" id="Q8EKX1"/>
<dbReference type="STRING" id="221109.gene:10735713"/>
<dbReference type="KEGG" id="oih:OB3461"/>
<dbReference type="eggNOG" id="COG0359">
    <property type="taxonomic scope" value="Bacteria"/>
</dbReference>
<dbReference type="HOGENOM" id="CLU_078938_3_2_9"/>
<dbReference type="OrthoDB" id="9788336at2"/>
<dbReference type="PhylomeDB" id="Q8EKX1"/>
<dbReference type="Proteomes" id="UP000000822">
    <property type="component" value="Chromosome"/>
</dbReference>
<dbReference type="GO" id="GO:1990904">
    <property type="term" value="C:ribonucleoprotein complex"/>
    <property type="evidence" value="ECO:0007669"/>
    <property type="project" value="UniProtKB-KW"/>
</dbReference>
<dbReference type="GO" id="GO:0005840">
    <property type="term" value="C:ribosome"/>
    <property type="evidence" value="ECO:0007669"/>
    <property type="project" value="UniProtKB-KW"/>
</dbReference>
<dbReference type="GO" id="GO:0019843">
    <property type="term" value="F:rRNA binding"/>
    <property type="evidence" value="ECO:0007669"/>
    <property type="project" value="UniProtKB-UniRule"/>
</dbReference>
<dbReference type="GO" id="GO:0003735">
    <property type="term" value="F:structural constituent of ribosome"/>
    <property type="evidence" value="ECO:0007669"/>
    <property type="project" value="InterPro"/>
</dbReference>
<dbReference type="GO" id="GO:0006412">
    <property type="term" value="P:translation"/>
    <property type="evidence" value="ECO:0007669"/>
    <property type="project" value="UniProtKB-UniRule"/>
</dbReference>
<dbReference type="FunFam" id="3.10.430.100:FF:000002">
    <property type="entry name" value="50S ribosomal protein L9"/>
    <property type="match status" value="1"/>
</dbReference>
<dbReference type="FunFam" id="3.40.5.10:FF:000002">
    <property type="entry name" value="50S ribosomal protein L9"/>
    <property type="match status" value="1"/>
</dbReference>
<dbReference type="Gene3D" id="3.10.430.100">
    <property type="entry name" value="Ribosomal protein L9, C-terminal domain"/>
    <property type="match status" value="1"/>
</dbReference>
<dbReference type="Gene3D" id="3.40.5.10">
    <property type="entry name" value="Ribosomal protein L9, N-terminal domain"/>
    <property type="match status" value="1"/>
</dbReference>
<dbReference type="HAMAP" id="MF_00503">
    <property type="entry name" value="Ribosomal_bL9"/>
    <property type="match status" value="1"/>
</dbReference>
<dbReference type="InterPro" id="IPR000244">
    <property type="entry name" value="Ribosomal_bL9"/>
</dbReference>
<dbReference type="InterPro" id="IPR009027">
    <property type="entry name" value="Ribosomal_bL9/RNase_H1_N"/>
</dbReference>
<dbReference type="InterPro" id="IPR020594">
    <property type="entry name" value="Ribosomal_bL9_bac/chp"/>
</dbReference>
<dbReference type="InterPro" id="IPR020069">
    <property type="entry name" value="Ribosomal_bL9_C"/>
</dbReference>
<dbReference type="InterPro" id="IPR036791">
    <property type="entry name" value="Ribosomal_bL9_C_sf"/>
</dbReference>
<dbReference type="InterPro" id="IPR020070">
    <property type="entry name" value="Ribosomal_bL9_N"/>
</dbReference>
<dbReference type="InterPro" id="IPR036935">
    <property type="entry name" value="Ribosomal_bL9_N_sf"/>
</dbReference>
<dbReference type="NCBIfam" id="TIGR00158">
    <property type="entry name" value="L9"/>
    <property type="match status" value="1"/>
</dbReference>
<dbReference type="PANTHER" id="PTHR21368">
    <property type="entry name" value="50S RIBOSOMAL PROTEIN L9"/>
    <property type="match status" value="1"/>
</dbReference>
<dbReference type="Pfam" id="PF03948">
    <property type="entry name" value="Ribosomal_L9_C"/>
    <property type="match status" value="1"/>
</dbReference>
<dbReference type="Pfam" id="PF01281">
    <property type="entry name" value="Ribosomal_L9_N"/>
    <property type="match status" value="1"/>
</dbReference>
<dbReference type="SUPFAM" id="SSF55658">
    <property type="entry name" value="L9 N-domain-like"/>
    <property type="match status" value="1"/>
</dbReference>
<dbReference type="SUPFAM" id="SSF55653">
    <property type="entry name" value="Ribosomal protein L9 C-domain"/>
    <property type="match status" value="1"/>
</dbReference>
<accession>Q8EKX1</accession>